<protein>
    <recommendedName>
        <fullName>Malic enzyme, hydrogenosomal</fullName>
        <shortName>ME</shortName>
        <ecNumber>1.1.1.40</ecNumber>
    </recommendedName>
</protein>
<dbReference type="EC" id="1.1.1.40"/>
<dbReference type="EMBL" id="U62041">
    <property type="protein sequence ID" value="AAC49572.1"/>
    <property type="molecule type" value="mRNA"/>
</dbReference>
<dbReference type="SMR" id="P78715"/>
<dbReference type="GO" id="GO:0042566">
    <property type="term" value="C:hydrogenosome"/>
    <property type="evidence" value="ECO:0007669"/>
    <property type="project" value="UniProtKB-SubCell"/>
</dbReference>
<dbReference type="GO" id="GO:0005739">
    <property type="term" value="C:mitochondrion"/>
    <property type="evidence" value="ECO:0007669"/>
    <property type="project" value="TreeGrafter"/>
</dbReference>
<dbReference type="GO" id="GO:0004471">
    <property type="term" value="F:malate dehydrogenase (decarboxylating) (NAD+) activity"/>
    <property type="evidence" value="ECO:0007669"/>
    <property type="project" value="TreeGrafter"/>
</dbReference>
<dbReference type="GO" id="GO:0004473">
    <property type="term" value="F:malate dehydrogenase (decarboxylating) (NADP+) activity"/>
    <property type="evidence" value="ECO:0007669"/>
    <property type="project" value="UniProtKB-EC"/>
</dbReference>
<dbReference type="GO" id="GO:0046872">
    <property type="term" value="F:metal ion binding"/>
    <property type="evidence" value="ECO:0007669"/>
    <property type="project" value="UniProtKB-KW"/>
</dbReference>
<dbReference type="GO" id="GO:0051287">
    <property type="term" value="F:NAD binding"/>
    <property type="evidence" value="ECO:0007669"/>
    <property type="project" value="InterPro"/>
</dbReference>
<dbReference type="GO" id="GO:0008948">
    <property type="term" value="F:oxaloacetate decarboxylase activity"/>
    <property type="evidence" value="ECO:0007669"/>
    <property type="project" value="RHEA"/>
</dbReference>
<dbReference type="GO" id="GO:0006108">
    <property type="term" value="P:malate metabolic process"/>
    <property type="evidence" value="ECO:0007669"/>
    <property type="project" value="TreeGrafter"/>
</dbReference>
<dbReference type="CDD" id="cd05312">
    <property type="entry name" value="NAD_bind_1_malic_enz"/>
    <property type="match status" value="1"/>
</dbReference>
<dbReference type="Gene3D" id="3.40.50.10380">
    <property type="entry name" value="Malic enzyme, N-terminal domain"/>
    <property type="match status" value="1"/>
</dbReference>
<dbReference type="Gene3D" id="3.40.50.720">
    <property type="entry name" value="NAD(P)-binding Rossmann-like Domain"/>
    <property type="match status" value="1"/>
</dbReference>
<dbReference type="InterPro" id="IPR046346">
    <property type="entry name" value="Aminoacid_DH-like_N_sf"/>
</dbReference>
<dbReference type="InterPro" id="IPR015884">
    <property type="entry name" value="Malic_enzyme_CS"/>
</dbReference>
<dbReference type="InterPro" id="IPR012301">
    <property type="entry name" value="Malic_N_dom"/>
</dbReference>
<dbReference type="InterPro" id="IPR037062">
    <property type="entry name" value="Malic_N_dom_sf"/>
</dbReference>
<dbReference type="InterPro" id="IPR012302">
    <property type="entry name" value="Malic_NAD-bd"/>
</dbReference>
<dbReference type="InterPro" id="IPR001891">
    <property type="entry name" value="Malic_OxRdtase"/>
</dbReference>
<dbReference type="InterPro" id="IPR036291">
    <property type="entry name" value="NAD(P)-bd_dom_sf"/>
</dbReference>
<dbReference type="NCBIfam" id="NF010052">
    <property type="entry name" value="PRK13529.1"/>
    <property type="match status" value="1"/>
</dbReference>
<dbReference type="PANTHER" id="PTHR23406">
    <property type="entry name" value="MALIC ENZYME-RELATED"/>
    <property type="match status" value="1"/>
</dbReference>
<dbReference type="PANTHER" id="PTHR23406:SF32">
    <property type="entry name" value="NADP-DEPENDENT MALIC ENZYME"/>
    <property type="match status" value="1"/>
</dbReference>
<dbReference type="Pfam" id="PF00390">
    <property type="entry name" value="malic"/>
    <property type="match status" value="1"/>
</dbReference>
<dbReference type="Pfam" id="PF03949">
    <property type="entry name" value="Malic_M"/>
    <property type="match status" value="1"/>
</dbReference>
<dbReference type="PIRSF" id="PIRSF000106">
    <property type="entry name" value="ME"/>
    <property type="match status" value="1"/>
</dbReference>
<dbReference type="PRINTS" id="PR00072">
    <property type="entry name" value="MALOXRDTASE"/>
</dbReference>
<dbReference type="SMART" id="SM01274">
    <property type="entry name" value="malic"/>
    <property type="match status" value="1"/>
</dbReference>
<dbReference type="SMART" id="SM00919">
    <property type="entry name" value="Malic_M"/>
    <property type="match status" value="1"/>
</dbReference>
<dbReference type="SUPFAM" id="SSF53223">
    <property type="entry name" value="Aminoacid dehydrogenase-like, N-terminal domain"/>
    <property type="match status" value="1"/>
</dbReference>
<dbReference type="SUPFAM" id="SSF51735">
    <property type="entry name" value="NAD(P)-binding Rossmann-fold domains"/>
    <property type="match status" value="1"/>
</dbReference>
<dbReference type="PROSITE" id="PS00331">
    <property type="entry name" value="MALIC_ENZYMES"/>
    <property type="match status" value="1"/>
</dbReference>
<organism>
    <name type="scientific">Neocallimastix frontalis</name>
    <name type="common">Rumen fungus</name>
    <dbReference type="NCBI Taxonomy" id="4757"/>
    <lineage>
        <taxon>Eukaryota</taxon>
        <taxon>Fungi</taxon>
        <taxon>Fungi incertae sedis</taxon>
        <taxon>Chytridiomycota</taxon>
        <taxon>Chytridiomycota incertae sedis</taxon>
        <taxon>Neocallimastigomycetes</taxon>
        <taxon>Neocallimastigales</taxon>
        <taxon>Neocallimastigaceae</taxon>
        <taxon>Neocallimastix</taxon>
    </lineage>
</organism>
<name>MAOH_NEOFR</name>
<comment type="catalytic activity">
    <reaction>
        <text>(S)-malate + NADP(+) = pyruvate + CO2 + NADPH</text>
        <dbReference type="Rhea" id="RHEA:18253"/>
        <dbReference type="ChEBI" id="CHEBI:15361"/>
        <dbReference type="ChEBI" id="CHEBI:15589"/>
        <dbReference type="ChEBI" id="CHEBI:16526"/>
        <dbReference type="ChEBI" id="CHEBI:57783"/>
        <dbReference type="ChEBI" id="CHEBI:58349"/>
        <dbReference type="EC" id="1.1.1.40"/>
    </reaction>
</comment>
<comment type="catalytic activity">
    <reaction>
        <text>oxaloacetate + H(+) = pyruvate + CO2</text>
        <dbReference type="Rhea" id="RHEA:15641"/>
        <dbReference type="ChEBI" id="CHEBI:15361"/>
        <dbReference type="ChEBI" id="CHEBI:15378"/>
        <dbReference type="ChEBI" id="CHEBI:16452"/>
        <dbReference type="ChEBI" id="CHEBI:16526"/>
        <dbReference type="EC" id="1.1.1.40"/>
    </reaction>
</comment>
<comment type="cofactor">
    <cofactor evidence="1">
        <name>Mg(2+)</name>
        <dbReference type="ChEBI" id="CHEBI:18420"/>
    </cofactor>
    <cofactor evidence="1">
        <name>Mn(2+)</name>
        <dbReference type="ChEBI" id="CHEBI:29035"/>
    </cofactor>
    <text evidence="1">Divalent metal cations. Prefers magnesium or manganese.</text>
</comment>
<comment type="subcellular location">
    <subcellularLocation>
        <location>Hydrogenosome</location>
    </subcellularLocation>
</comment>
<comment type="similarity">
    <text evidence="2">Belongs to the malic enzymes family.</text>
</comment>
<sequence length="592" mass="65546">MLAPIQTIARPVSSILPATGALAAKRTFFAPSEVYNKKQVIVTKKTGLDILNDPKLNKGSAFTADEKDRLGIRGLVPPRPQSLEAQYKRCKTNLDKISDPLEKFIYLNHLQNRNETLYYKMILENFVELAPIIYTPVVGEACQKFHKIFTQTRGMYFSTADRGQMSAVAANWPYDDVDVIVVTDGSRILGLGDLGAGGMQIPIGKLTLYVCGGGINPRNVLPIVLDVGTNNKELLNDPLYLGMQHPRLQGEEFHAFVDEWVSAITDRFPKAVIQFEDFMMPNALDLLLKYKDQICMFNDDIQSTGAITLASVLATMRARGGTFADIKKETFLCLGAGSSGVGVCETIVDCIVAEGATREEAYAQFYMFDHKGLLGKGRDDLLPSQQVFMRKEIEGGKTPAELLKKIKPTCLLGLSTCPKLFNKEMLSYVASYCEKPGIFPLSNPTSRSECTAEEAVEFTDGNLIFASGSPFDPVEWKGKTIQTNQCNNSYSFPGIGLGLVSSRATRVPFETFQVCARVIASLGTPEMLATGKIFPDLDNLRAVSLEVGIEVAKMAERMNIATQFPPKGMDWREWLKHNMWQPEYPHIVVKNL</sequence>
<keyword id="KW-0903">Direct protein sequencing</keyword>
<keyword id="KW-0377">Hydrogenosome</keyword>
<keyword id="KW-0479">Metal-binding</keyword>
<keyword id="KW-0521">NADP</keyword>
<keyword id="KW-0560">Oxidoreductase</keyword>
<keyword id="KW-0809">Transit peptide</keyword>
<evidence type="ECO:0000250" key="1"/>
<evidence type="ECO:0000305" key="2"/>
<accession>P78715</accession>
<reference key="1">
    <citation type="journal article" date="1997" name="Mol. Microbiol.">
        <title>A mitochondrial-like targeting signal on the hydrogenosomal malic enzyme from the anaerobic fungus Neocallimastix frontalis: support for the hypothesis that hydrogenosomes are modified mitochondria.</title>
        <authorList>
            <person name="van der Giezen M."/>
            <person name="Rechinger K.B."/>
            <person name="Svendsen I."/>
            <person name="Durand R."/>
            <person name="Hirt R.P."/>
            <person name="Fevre M."/>
            <person name="Embley T.M."/>
            <person name="Prins R.A."/>
        </authorList>
    </citation>
    <scope>NUCLEOTIDE SEQUENCE [MRNA]</scope>
    <scope>PARTIAL PROTEIN SEQUENCE</scope>
    <source>
        <strain>L2</strain>
    </source>
</reference>
<proteinExistence type="evidence at protein level"/>
<feature type="transit peptide" description="Hydrogenosome">
    <location>
        <begin position="1"/>
        <end position="27"/>
    </location>
</feature>
<feature type="chain" id="PRO_0000018549" description="Malic enzyme, hydrogenosomal">
    <location>
        <begin position="28"/>
        <end position="592"/>
    </location>
</feature>
<feature type="active site" description="Proton donor" evidence="1">
    <location>
        <position position="134"/>
    </location>
</feature>
<feature type="active site" description="Proton acceptor" evidence="1">
    <location>
        <position position="205"/>
    </location>
</feature>
<feature type="binding site" evidence="1">
    <location>
        <begin position="182"/>
        <end position="205"/>
    </location>
    <ligand>
        <name>NADP(+)</name>
        <dbReference type="ChEBI" id="CHEBI:58349"/>
    </ligand>
</feature>
<feature type="binding site" evidence="1">
    <location>
        <position position="187"/>
    </location>
    <ligand>
        <name>NAD(+)</name>
        <dbReference type="ChEBI" id="CHEBI:57540"/>
    </ligand>
</feature>
<feature type="binding site" evidence="1">
    <location>
        <position position="276"/>
    </location>
    <ligand>
        <name>a divalent metal cation</name>
        <dbReference type="ChEBI" id="CHEBI:60240"/>
    </ligand>
</feature>
<feature type="binding site" evidence="1">
    <location>
        <position position="277"/>
    </location>
    <ligand>
        <name>a divalent metal cation</name>
        <dbReference type="ChEBI" id="CHEBI:60240"/>
    </ligand>
</feature>
<feature type="binding site" evidence="1">
    <location>
        <position position="300"/>
    </location>
    <ligand>
        <name>a divalent metal cation</name>
        <dbReference type="ChEBI" id="CHEBI:60240"/>
    </ligand>
</feature>
<feature type="binding site" evidence="1">
    <location>
        <position position="300"/>
    </location>
    <ligand>
        <name>NAD(+)</name>
        <dbReference type="ChEBI" id="CHEBI:57540"/>
    </ligand>
</feature>
<feature type="binding site" evidence="1">
    <location>
        <begin position="335"/>
        <end position="352"/>
    </location>
    <ligand>
        <name>NADP(+)</name>
        <dbReference type="ChEBI" id="CHEBI:58349"/>
    </ligand>
</feature>
<feature type="binding site" evidence="1">
    <location>
        <position position="443"/>
    </location>
    <ligand>
        <name>NAD(+)</name>
        <dbReference type="ChEBI" id="CHEBI:57540"/>
    </ligand>
</feature>
<feature type="site" description="Important for activity" evidence="1">
    <location>
        <position position="300"/>
    </location>
</feature>